<proteinExistence type="evidence at protein level"/>
<feature type="chain" id="PRO_0000452983" description="Bowman-Birk type proteinase inhibitor B7">
    <location>
        <begin position="1"/>
        <end position="62"/>
    </location>
</feature>
<feature type="site" description="Reactive bond for trypsin" evidence="1">
    <location>
        <begin position="15"/>
        <end position="16"/>
    </location>
</feature>
<feature type="disulfide bond" evidence="1">
    <location>
        <begin position="5"/>
        <end position="59"/>
    </location>
</feature>
<feature type="disulfide bond" evidence="1">
    <location>
        <begin position="6"/>
        <end position="23"/>
    </location>
</feature>
<feature type="disulfide bond" evidence="1">
    <location>
        <begin position="13"/>
        <end position="21"/>
    </location>
</feature>
<feature type="disulfide bond" evidence="1">
    <location>
        <begin position="30"/>
        <end position="37"/>
    </location>
</feature>
<feature type="disulfide bond" evidence="1">
    <location>
        <begin position="34"/>
        <end position="51"/>
    </location>
</feature>
<organism>
    <name type="scientific">Hyacinthus orientalis</name>
    <name type="common">Common hyacinth</name>
    <dbReference type="NCBI Taxonomy" id="82025"/>
    <lineage>
        <taxon>Eukaryota</taxon>
        <taxon>Viridiplantae</taxon>
        <taxon>Streptophyta</taxon>
        <taxon>Embryophyta</taxon>
        <taxon>Tracheophyta</taxon>
        <taxon>Spermatophyta</taxon>
        <taxon>Magnoliopsida</taxon>
        <taxon>Liliopsida</taxon>
        <taxon>Asparagales</taxon>
        <taxon>Hyacinthaceae</taxon>
        <taxon>Hyacinthoideae</taxon>
        <taxon>Hyacintheae</taxon>
        <taxon>Hyacinthus</taxon>
    </lineage>
</organism>
<reference key="1">
    <citation type="journal article" date="2021" name="Biochem. J.">
        <title>Isolation and functional diversity of Bowman-Birk type serine proteinase inhibitors from Hyacinthus orientalis.</title>
        <authorList>
            <person name="Aoki-Shioi N."/>
            <person name="Terada S."/>
            <person name="Hellinger R."/>
            <person name="Furuta Y."/>
            <person name="Gruber C.W."/>
        </authorList>
    </citation>
    <scope>PROTEIN SEQUENCE</scope>
    <scope>FUNCTION</scope>
    <scope>TISSUE SPECIFICITY</scope>
    <source>
        <tissue evidence="3">Bulb</tissue>
    </source>
</reference>
<evidence type="ECO:0000250" key="1">
    <source>
        <dbReference type="UniProtKB" id="P80321"/>
    </source>
</evidence>
<evidence type="ECO:0000269" key="2">
    <source>
    </source>
</evidence>
<evidence type="ECO:0000303" key="3">
    <source>
    </source>
</evidence>
<evidence type="ECO:0000305" key="4"/>
<accession>C0HLT3</accession>
<name>IBBB7_HYAOR</name>
<sequence length="62" mass="6908">GEGACCNNCDFICGRAGFSRCRCLDLVTKCHPSCSNCEMTETPYWPCRYQCLDMDPDDCATP</sequence>
<keyword id="KW-0903">Direct protein sequencing</keyword>
<keyword id="KW-1015">Disulfide bond</keyword>
<keyword id="KW-0646">Protease inhibitor</keyword>
<keyword id="KW-0722">Serine protease inhibitor</keyword>
<dbReference type="SMR" id="C0HLT3"/>
<dbReference type="GO" id="GO:0005576">
    <property type="term" value="C:extracellular region"/>
    <property type="evidence" value="ECO:0007669"/>
    <property type="project" value="InterPro"/>
</dbReference>
<dbReference type="GO" id="GO:0004867">
    <property type="term" value="F:serine-type endopeptidase inhibitor activity"/>
    <property type="evidence" value="ECO:0000314"/>
    <property type="project" value="UniProtKB"/>
</dbReference>
<dbReference type="GO" id="GO:0010951">
    <property type="term" value="P:negative regulation of endopeptidase activity"/>
    <property type="evidence" value="ECO:0000314"/>
    <property type="project" value="UniProtKB"/>
</dbReference>
<dbReference type="Gene3D" id="2.10.69.10">
    <property type="entry name" value="Cysteine Protease (Bromelain) Inhibitor, subunit H"/>
    <property type="match status" value="1"/>
</dbReference>
<dbReference type="InterPro" id="IPR035995">
    <property type="entry name" value="Bowman-Birk_prot_inh"/>
</dbReference>
<dbReference type="InterPro" id="IPR000877">
    <property type="entry name" value="Prot_inh_BBI"/>
</dbReference>
<dbReference type="SMART" id="SM00269">
    <property type="entry name" value="BowB"/>
    <property type="match status" value="1"/>
</dbReference>
<dbReference type="SUPFAM" id="SSF57247">
    <property type="entry name" value="Bowman-Birk inhibitor, BBI"/>
    <property type="match status" value="1"/>
</dbReference>
<comment type="function">
    <text evidence="2">Serine protease inhibitor (PubMed:33666645). Inhibits trypsin (Ki = 65 nM) and weakly inhibits chymotrypsin (Ki = 295 nM) (PubMed:33666645). Does not inhibit bacterial subtilisin (PubMed:33666645).</text>
</comment>
<comment type="tissue specificity">
    <text evidence="2">Expressed in bulb (at protein level).</text>
</comment>
<comment type="similarity">
    <text evidence="4">Belongs to the Bowman-Birk serine protease inhibitor family.</text>
</comment>
<protein>
    <recommendedName>
        <fullName evidence="3">Bowman-Birk type proteinase inhibitor B7</fullName>
        <shortName evidence="3">HOSPI-B7</shortName>
    </recommendedName>
</protein>